<protein>
    <recommendedName>
        <fullName evidence="13">S-sulfo-L-cysteine synthase (O-acetyl-L-serine-dependent), chloroplastic</fullName>
        <ecNumber evidence="8">2.5.1.144</ecNumber>
    </recommendedName>
    <alternativeName>
        <fullName evidence="12">AtCS26</fullName>
    </alternativeName>
    <alternativeName>
        <fullName evidence="11">Beta-substituted Ala synthase 5;1</fullName>
        <shortName evidence="11">ARAth-Bsas5;1</shortName>
    </alternativeName>
    <alternativeName>
        <fullName evidence="13">O-acetylserine sulfhydrylase</fullName>
    </alternativeName>
</protein>
<organism>
    <name type="scientific">Arabidopsis thaliana</name>
    <name type="common">Mouse-ear cress</name>
    <dbReference type="NCBI Taxonomy" id="3702"/>
    <lineage>
        <taxon>Eukaryota</taxon>
        <taxon>Viridiplantae</taxon>
        <taxon>Streptophyta</taxon>
        <taxon>Embryophyta</taxon>
        <taxon>Tracheophyta</taxon>
        <taxon>Spermatophyta</taxon>
        <taxon>Magnoliopsida</taxon>
        <taxon>eudicotyledons</taxon>
        <taxon>Gunneridae</taxon>
        <taxon>Pentapetalae</taxon>
        <taxon>rosids</taxon>
        <taxon>malvids</taxon>
        <taxon>Brassicales</taxon>
        <taxon>Brassicaceae</taxon>
        <taxon>Camelineae</taxon>
        <taxon>Arabidopsis</taxon>
    </lineage>
</organism>
<name>CYSK4_ARATH</name>
<evidence type="ECO:0000250" key="1"/>
<evidence type="ECO:0000250" key="2">
    <source>
        <dbReference type="UniProtKB" id="P0A1E3"/>
    </source>
</evidence>
<evidence type="ECO:0000255" key="3"/>
<evidence type="ECO:0000256" key="4">
    <source>
        <dbReference type="SAM" id="MobiDB-lite"/>
    </source>
</evidence>
<evidence type="ECO:0000269" key="5">
    <source>
    </source>
</evidence>
<evidence type="ECO:0000269" key="6">
    <source>
    </source>
</evidence>
<evidence type="ECO:0000269" key="7">
    <source>
    </source>
</evidence>
<evidence type="ECO:0000269" key="8">
    <source>
    </source>
</evidence>
<evidence type="ECO:0000269" key="9">
    <source>
    </source>
</evidence>
<evidence type="ECO:0000269" key="10">
    <source>
    </source>
</evidence>
<evidence type="ECO:0000303" key="11">
    <source>
    </source>
</evidence>
<evidence type="ECO:0000303" key="12">
    <source>
    </source>
</evidence>
<evidence type="ECO:0000305" key="13"/>
<evidence type="ECO:0000312" key="14">
    <source>
        <dbReference type="Araport" id="AT3G03630"/>
    </source>
</evidence>
<evidence type="ECO:0000312" key="15">
    <source>
        <dbReference type="EMBL" id="AAF03469.1"/>
    </source>
</evidence>
<comment type="function">
    <text evidence="6 8 9 10">S-sulfocysteine synthase that plays an important role in chloroplast function and is essential for light-dependent redox regulation and photosynthetic performance within the chloroplast (PubMed:20179139, PubMed:22829322, PubMed:23333972). Probably unable to interact with SAT and to form the decameric Cys synthase complex (CSC) required for O-acetylserine (thiol)-lyase (OAS-TL) enzymatic activity (PubMed:18223034). Lacks OAS-TL activity (PubMed:20179139).</text>
</comment>
<comment type="catalytic activity">
    <reaction evidence="8">
        <text>O-acetyl-L-serine + thiosulfate = S-sulfo-L-cysteine + acetate + H(+)</text>
        <dbReference type="Rhea" id="RHEA:30891"/>
        <dbReference type="ChEBI" id="CHEBI:15378"/>
        <dbReference type="ChEBI" id="CHEBI:30089"/>
        <dbReference type="ChEBI" id="CHEBI:33542"/>
        <dbReference type="ChEBI" id="CHEBI:58340"/>
        <dbReference type="ChEBI" id="CHEBI:62225"/>
        <dbReference type="EC" id="2.5.1.144"/>
    </reaction>
</comment>
<comment type="cofactor">
    <cofactor evidence="2">
        <name>pyridoxal 5'-phosphate</name>
        <dbReference type="ChEBI" id="CHEBI:597326"/>
    </cofactor>
</comment>
<comment type="biophysicochemical properties">
    <kinetics>
        <KM evidence="8">0.46 mM for O-acetyl-L-serine</KM>
        <KM evidence="8">0.93 mM for thiosulfate</KM>
        <Vmax evidence="8">20.7 mmol/min/mg enzyme toward thiosulfate</Vmax>
    </kinetics>
    <phDependence>
        <text evidence="8">Optimum pH is 8-9.</text>
    </phDependence>
    <temperatureDependence>
        <text evidence="8">Optimum temperature is 30 degrees Celsius.</text>
    </temperatureDependence>
</comment>
<comment type="subunit">
    <text evidence="1">Homodimer.</text>
</comment>
<comment type="subcellular location">
    <subcellularLocation>
        <location evidence="7 9">Plastid</location>
        <location evidence="7 9">Chloroplast thylakoid lumen</location>
    </subcellularLocation>
</comment>
<comment type="disruption phenotype">
    <text evidence="5 8 9">No visible phenotype under normal growth condition (PubMed:18024555). No visible phenotype under short day (SD) conditions (PubMed:20179139). Reduced growth and pale green leaf phenotype under long day (LD) conditions (PubMed:20179139, PubMed:22829322).</text>
</comment>
<comment type="similarity">
    <text evidence="13">Belongs to the cysteine synthase/cystathionine beta-synthase family.</text>
</comment>
<keyword id="KW-0028">Amino-acid biosynthesis</keyword>
<keyword id="KW-0150">Chloroplast</keyword>
<keyword id="KW-0198">Cysteine biosynthesis</keyword>
<keyword id="KW-0934">Plastid</keyword>
<keyword id="KW-0663">Pyridoxal phosphate</keyword>
<keyword id="KW-1185">Reference proteome</keyword>
<keyword id="KW-0793">Thylakoid</keyword>
<keyword id="KW-0808">Transferase</keyword>
<keyword id="KW-0809">Transit peptide</keyword>
<feature type="transit peptide" description="Chloroplast" evidence="3">
    <location>
        <begin position="1"/>
        <end status="unknown"/>
    </location>
</feature>
<feature type="transit peptide" description="Thylakoid" evidence="3">
    <location>
        <begin status="unknown"/>
        <end position="84"/>
    </location>
</feature>
<feature type="chain" id="PRO_0000006354" description="S-sulfo-L-cysteine synthase (O-acetyl-L-serine-dependent), chloroplastic">
    <location>
        <begin position="85"/>
        <end position="404"/>
    </location>
</feature>
<feature type="region of interest" description="Disordered" evidence="4">
    <location>
        <begin position="61"/>
        <end position="84"/>
    </location>
</feature>
<feature type="binding site" evidence="2">
    <location>
        <position position="171"/>
    </location>
    <ligand>
        <name>pyridoxal 5'-phosphate</name>
        <dbReference type="ChEBI" id="CHEBI:597326"/>
    </ligand>
</feature>
<feature type="binding site" evidence="2">
    <location>
        <begin position="275"/>
        <end position="279"/>
    </location>
    <ligand>
        <name>pyridoxal 5'-phosphate</name>
        <dbReference type="ChEBI" id="CHEBI:597326"/>
    </ligand>
</feature>
<feature type="binding site" evidence="2">
    <location>
        <position position="353"/>
    </location>
    <ligand>
        <name>pyridoxal 5'-phosphate</name>
        <dbReference type="ChEBI" id="CHEBI:597326"/>
    </ligand>
</feature>
<feature type="modified residue" description="N6-(pyridoxal phosphate)lysine" evidence="2">
    <location>
        <position position="140"/>
    </location>
</feature>
<gene>
    <name evidence="12" type="primary">CS26</name>
    <name evidence="14" type="ordered locus">At3g03630</name>
    <name evidence="15" type="ORF">T12J13.9</name>
</gene>
<dbReference type="EC" id="2.5.1.144" evidence="8"/>
<dbReference type="EMBL" id="AB003041">
    <property type="protein sequence ID" value="BAA21628.1"/>
    <property type="molecule type" value="mRNA"/>
</dbReference>
<dbReference type="EMBL" id="AC009327">
    <property type="protein sequence ID" value="AAF03469.1"/>
    <property type="molecule type" value="Genomic_DNA"/>
</dbReference>
<dbReference type="EMBL" id="CP002686">
    <property type="protein sequence ID" value="AEE73965.1"/>
    <property type="molecule type" value="Genomic_DNA"/>
</dbReference>
<dbReference type="EMBL" id="AY099573">
    <property type="protein sequence ID" value="AAM20425.1"/>
    <property type="molecule type" value="mRNA"/>
</dbReference>
<dbReference type="EMBL" id="BT002155">
    <property type="protein sequence ID" value="AAN72166.1"/>
    <property type="molecule type" value="mRNA"/>
</dbReference>
<dbReference type="RefSeq" id="NP_187013.1">
    <property type="nucleotide sequence ID" value="NM_111234.5"/>
</dbReference>
<dbReference type="SMR" id="O22682"/>
<dbReference type="BioGRID" id="6536">
    <property type="interactions" value="1"/>
</dbReference>
<dbReference type="FunCoup" id="O22682">
    <property type="interactions" value="1259"/>
</dbReference>
<dbReference type="IntAct" id="O22682">
    <property type="interactions" value="1"/>
</dbReference>
<dbReference type="STRING" id="3702.O22682"/>
<dbReference type="PaxDb" id="3702-AT3G03630.1"/>
<dbReference type="ProteomicsDB" id="224041"/>
<dbReference type="EnsemblPlants" id="AT3G03630.1">
    <property type="protein sequence ID" value="AT3G03630.1"/>
    <property type="gene ID" value="AT3G03630"/>
</dbReference>
<dbReference type="GeneID" id="821203"/>
<dbReference type="Gramene" id="AT3G03630.1">
    <property type="protein sequence ID" value="AT3G03630.1"/>
    <property type="gene ID" value="AT3G03630"/>
</dbReference>
<dbReference type="KEGG" id="ath:AT3G03630"/>
<dbReference type="Araport" id="AT3G03630"/>
<dbReference type="TAIR" id="AT3G03630">
    <property type="gene designation" value="CS26"/>
</dbReference>
<dbReference type="eggNOG" id="KOG1252">
    <property type="taxonomic scope" value="Eukaryota"/>
</dbReference>
<dbReference type="HOGENOM" id="CLU_021018_1_1_1"/>
<dbReference type="InParanoid" id="O22682"/>
<dbReference type="OMA" id="CCIVADH"/>
<dbReference type="OrthoDB" id="10259545at2759"/>
<dbReference type="PhylomeDB" id="O22682"/>
<dbReference type="BioCyc" id="ARA:AT3G03630-MONOMER"/>
<dbReference type="BioCyc" id="MetaCyc:AT3G03630-MONOMER"/>
<dbReference type="BRENDA" id="2.5.1.47">
    <property type="organism ID" value="399"/>
</dbReference>
<dbReference type="PRO" id="PR:O22682"/>
<dbReference type="Proteomes" id="UP000006548">
    <property type="component" value="Chromosome 3"/>
</dbReference>
<dbReference type="ExpressionAtlas" id="O22682">
    <property type="expression patterns" value="baseline and differential"/>
</dbReference>
<dbReference type="GO" id="GO:0009507">
    <property type="term" value="C:chloroplast"/>
    <property type="evidence" value="ECO:0000314"/>
    <property type="project" value="TAIR"/>
</dbReference>
<dbReference type="GO" id="GO:0009543">
    <property type="term" value="C:chloroplast thylakoid lumen"/>
    <property type="evidence" value="ECO:0007669"/>
    <property type="project" value="UniProtKB-SubCell"/>
</dbReference>
<dbReference type="GO" id="GO:0031977">
    <property type="term" value="C:thylakoid lumen"/>
    <property type="evidence" value="ECO:0000314"/>
    <property type="project" value="TAIR"/>
</dbReference>
<dbReference type="GO" id="GO:0004124">
    <property type="term" value="F:cysteine synthase activity"/>
    <property type="evidence" value="ECO:0000314"/>
    <property type="project" value="TAIR"/>
</dbReference>
<dbReference type="GO" id="GO:0006535">
    <property type="term" value="P:cysteine biosynthetic process from serine"/>
    <property type="evidence" value="ECO:0007669"/>
    <property type="project" value="InterPro"/>
</dbReference>
<dbReference type="GO" id="GO:0015979">
    <property type="term" value="P:photosynthesis"/>
    <property type="evidence" value="ECO:0000315"/>
    <property type="project" value="TAIR"/>
</dbReference>
<dbReference type="GO" id="GO:0009643">
    <property type="term" value="P:photosynthetic acclimation"/>
    <property type="evidence" value="ECO:0000315"/>
    <property type="project" value="TAIR"/>
</dbReference>
<dbReference type="GO" id="GO:0010310">
    <property type="term" value="P:regulation of hydrogen peroxide metabolic process"/>
    <property type="evidence" value="ECO:0000315"/>
    <property type="project" value="TAIR"/>
</dbReference>
<dbReference type="GO" id="GO:0090322">
    <property type="term" value="P:regulation of superoxide metabolic process"/>
    <property type="evidence" value="ECO:0000315"/>
    <property type="project" value="TAIR"/>
</dbReference>
<dbReference type="CDD" id="cd01561">
    <property type="entry name" value="CBS_like"/>
    <property type="match status" value="1"/>
</dbReference>
<dbReference type="FunFam" id="3.40.50.1100:FF:000006">
    <property type="entry name" value="Cysteine synthase"/>
    <property type="match status" value="1"/>
</dbReference>
<dbReference type="Gene3D" id="3.40.50.1100">
    <property type="match status" value="2"/>
</dbReference>
<dbReference type="InterPro" id="IPR005856">
    <property type="entry name" value="Cys_synth"/>
</dbReference>
<dbReference type="InterPro" id="IPR050214">
    <property type="entry name" value="Cys_Synth/Cystath_Beta-Synth"/>
</dbReference>
<dbReference type="InterPro" id="IPR005859">
    <property type="entry name" value="CysK"/>
</dbReference>
<dbReference type="InterPro" id="IPR001216">
    <property type="entry name" value="P-phosphate_BS"/>
</dbReference>
<dbReference type="InterPro" id="IPR001926">
    <property type="entry name" value="TrpB-like_PALP"/>
</dbReference>
<dbReference type="InterPro" id="IPR036052">
    <property type="entry name" value="TrpB-like_PALP_sf"/>
</dbReference>
<dbReference type="NCBIfam" id="TIGR01139">
    <property type="entry name" value="cysK"/>
    <property type="match status" value="1"/>
</dbReference>
<dbReference type="NCBIfam" id="TIGR01136">
    <property type="entry name" value="cysKM"/>
    <property type="match status" value="1"/>
</dbReference>
<dbReference type="PANTHER" id="PTHR10314">
    <property type="entry name" value="CYSTATHIONINE BETA-SYNTHASE"/>
    <property type="match status" value="1"/>
</dbReference>
<dbReference type="Pfam" id="PF00291">
    <property type="entry name" value="PALP"/>
    <property type="match status" value="1"/>
</dbReference>
<dbReference type="SUPFAM" id="SSF53686">
    <property type="entry name" value="Tryptophan synthase beta subunit-like PLP-dependent enzymes"/>
    <property type="match status" value="1"/>
</dbReference>
<dbReference type="PROSITE" id="PS00901">
    <property type="entry name" value="CYS_SYNTHASE"/>
    <property type="match status" value="1"/>
</dbReference>
<sequence length="404" mass="43161">MAFASPSLRLLPQSPLGRITSKLHRFSTAKLSLFSFHHDSSSSLAVRTPVSSFVVGAISGKSSTGTKSKSKTKRKPPPPPPVTTVAEEQHIAESETVNIAEDVTQLIGSTPMVYLNRVTDGCLADIAAKLESMEPCRSVKDRIGLSMINEAENSGAITPRKTVLVEPTTGNTGLGIAFVAAAKGYKLIVTMPASINIERRMLLRALGAEIVLTNPEKGLKGAVDKAKEIVLKTKNAYMFQQFDNTANTKIHFETTGPEIWEDTMGNVDIFVAGIGTGGTVTGTGGFLKMMNKDIKVVGVEPSERSVISGDNPGYLPGILDVKLLDEVFKVSNGEAIEMARRLALEEGLLVGISSGAAAVAAVSLAKRAENAGKLITVLFPSHGERYITTALFSSINREVQEMRY</sequence>
<proteinExistence type="evidence at protein level"/>
<reference key="1">
    <citation type="online journal article" date="1997" name="Plant Gene Register">
        <title>Isolation of a novel cysteine synthase cDNA from Arabidopsis thaliana.</title>
        <authorList>
            <person name="Nakamura T."/>
            <person name="Koizumi N."/>
            <person name="Sano H."/>
        </authorList>
        <locator>PGR97-081</locator>
    </citation>
    <scope>NUCLEOTIDE SEQUENCE [MRNA]</scope>
    <source>
        <strain>cv. Columbia</strain>
    </source>
</reference>
<reference key="2">
    <citation type="journal article" date="2000" name="Nature">
        <title>Sequence and analysis of chromosome 3 of the plant Arabidopsis thaliana.</title>
        <authorList>
            <person name="Salanoubat M."/>
            <person name="Lemcke K."/>
            <person name="Rieger M."/>
            <person name="Ansorge W."/>
            <person name="Unseld M."/>
            <person name="Fartmann B."/>
            <person name="Valle G."/>
            <person name="Bloecker H."/>
            <person name="Perez-Alonso M."/>
            <person name="Obermaier B."/>
            <person name="Delseny M."/>
            <person name="Boutry M."/>
            <person name="Grivell L.A."/>
            <person name="Mache R."/>
            <person name="Puigdomenech P."/>
            <person name="De Simone V."/>
            <person name="Choisne N."/>
            <person name="Artiguenave F."/>
            <person name="Robert C."/>
            <person name="Brottier P."/>
            <person name="Wincker P."/>
            <person name="Cattolico L."/>
            <person name="Weissenbach J."/>
            <person name="Saurin W."/>
            <person name="Quetier F."/>
            <person name="Schaefer M."/>
            <person name="Mueller-Auer S."/>
            <person name="Gabel C."/>
            <person name="Fuchs M."/>
            <person name="Benes V."/>
            <person name="Wurmbach E."/>
            <person name="Drzonek H."/>
            <person name="Erfle H."/>
            <person name="Jordan N."/>
            <person name="Bangert S."/>
            <person name="Wiedelmann R."/>
            <person name="Kranz H."/>
            <person name="Voss H."/>
            <person name="Holland R."/>
            <person name="Brandt P."/>
            <person name="Nyakatura G."/>
            <person name="Vezzi A."/>
            <person name="D'Angelo M."/>
            <person name="Pallavicini A."/>
            <person name="Toppo S."/>
            <person name="Simionati B."/>
            <person name="Conrad A."/>
            <person name="Hornischer K."/>
            <person name="Kauer G."/>
            <person name="Loehnert T.-H."/>
            <person name="Nordsiek G."/>
            <person name="Reichelt J."/>
            <person name="Scharfe M."/>
            <person name="Schoen O."/>
            <person name="Bargues M."/>
            <person name="Terol J."/>
            <person name="Climent J."/>
            <person name="Navarro P."/>
            <person name="Collado C."/>
            <person name="Perez-Perez A."/>
            <person name="Ottenwaelder B."/>
            <person name="Duchemin D."/>
            <person name="Cooke R."/>
            <person name="Laudie M."/>
            <person name="Berger-Llauro C."/>
            <person name="Purnelle B."/>
            <person name="Masuy D."/>
            <person name="de Haan M."/>
            <person name="Maarse A.C."/>
            <person name="Alcaraz J.-P."/>
            <person name="Cottet A."/>
            <person name="Casacuberta E."/>
            <person name="Monfort A."/>
            <person name="Argiriou A."/>
            <person name="Flores M."/>
            <person name="Liguori R."/>
            <person name="Vitale D."/>
            <person name="Mannhaupt G."/>
            <person name="Haase D."/>
            <person name="Schoof H."/>
            <person name="Rudd S."/>
            <person name="Zaccaria P."/>
            <person name="Mewes H.-W."/>
            <person name="Mayer K.F.X."/>
            <person name="Kaul S."/>
            <person name="Town C.D."/>
            <person name="Koo H.L."/>
            <person name="Tallon L.J."/>
            <person name="Jenkins J."/>
            <person name="Rooney T."/>
            <person name="Rizzo M."/>
            <person name="Walts A."/>
            <person name="Utterback T."/>
            <person name="Fujii C.Y."/>
            <person name="Shea T.P."/>
            <person name="Creasy T.H."/>
            <person name="Haas B."/>
            <person name="Maiti R."/>
            <person name="Wu D."/>
            <person name="Peterson J."/>
            <person name="Van Aken S."/>
            <person name="Pai G."/>
            <person name="Militscher J."/>
            <person name="Sellers P."/>
            <person name="Gill J.E."/>
            <person name="Feldblyum T.V."/>
            <person name="Preuss D."/>
            <person name="Lin X."/>
            <person name="Nierman W.C."/>
            <person name="Salzberg S.L."/>
            <person name="White O."/>
            <person name="Venter J.C."/>
            <person name="Fraser C.M."/>
            <person name="Kaneko T."/>
            <person name="Nakamura Y."/>
            <person name="Sato S."/>
            <person name="Kato T."/>
            <person name="Asamizu E."/>
            <person name="Sasamoto S."/>
            <person name="Kimura T."/>
            <person name="Idesawa K."/>
            <person name="Kawashima K."/>
            <person name="Kishida Y."/>
            <person name="Kiyokawa C."/>
            <person name="Kohara M."/>
            <person name="Matsumoto M."/>
            <person name="Matsuno A."/>
            <person name="Muraki A."/>
            <person name="Nakayama S."/>
            <person name="Nakazaki N."/>
            <person name="Shinpo S."/>
            <person name="Takeuchi C."/>
            <person name="Wada T."/>
            <person name="Watanabe A."/>
            <person name="Yamada M."/>
            <person name="Yasuda M."/>
            <person name="Tabata S."/>
        </authorList>
    </citation>
    <scope>NUCLEOTIDE SEQUENCE [LARGE SCALE GENOMIC DNA]</scope>
    <source>
        <strain>cv. Columbia</strain>
    </source>
</reference>
<reference key="3">
    <citation type="journal article" date="2017" name="Plant J.">
        <title>Araport11: a complete reannotation of the Arabidopsis thaliana reference genome.</title>
        <authorList>
            <person name="Cheng C.Y."/>
            <person name="Krishnakumar V."/>
            <person name="Chan A.P."/>
            <person name="Thibaud-Nissen F."/>
            <person name="Schobel S."/>
            <person name="Town C.D."/>
        </authorList>
    </citation>
    <scope>GENOME REANNOTATION</scope>
    <source>
        <strain>cv. Columbia</strain>
    </source>
</reference>
<reference key="4">
    <citation type="journal article" date="2003" name="Science">
        <title>Empirical analysis of transcriptional activity in the Arabidopsis genome.</title>
        <authorList>
            <person name="Yamada K."/>
            <person name="Lim J."/>
            <person name="Dale J.M."/>
            <person name="Chen H."/>
            <person name="Shinn P."/>
            <person name="Palm C.J."/>
            <person name="Southwick A.M."/>
            <person name="Wu H.C."/>
            <person name="Kim C.J."/>
            <person name="Nguyen M."/>
            <person name="Pham P.K."/>
            <person name="Cheuk R.F."/>
            <person name="Karlin-Newmann G."/>
            <person name="Liu S.X."/>
            <person name="Lam B."/>
            <person name="Sakano H."/>
            <person name="Wu T."/>
            <person name="Yu G."/>
            <person name="Miranda M."/>
            <person name="Quach H.L."/>
            <person name="Tripp M."/>
            <person name="Chang C.H."/>
            <person name="Lee J.M."/>
            <person name="Toriumi M.J."/>
            <person name="Chan M.M."/>
            <person name="Tang C.C."/>
            <person name="Onodera C.S."/>
            <person name="Deng J.M."/>
            <person name="Akiyama K."/>
            <person name="Ansari Y."/>
            <person name="Arakawa T."/>
            <person name="Banh J."/>
            <person name="Banno F."/>
            <person name="Bowser L."/>
            <person name="Brooks S.Y."/>
            <person name="Carninci P."/>
            <person name="Chao Q."/>
            <person name="Choy N."/>
            <person name="Enju A."/>
            <person name="Goldsmith A.D."/>
            <person name="Gurjal M."/>
            <person name="Hansen N.F."/>
            <person name="Hayashizaki Y."/>
            <person name="Johnson-Hopson C."/>
            <person name="Hsuan V.W."/>
            <person name="Iida K."/>
            <person name="Karnes M."/>
            <person name="Khan S."/>
            <person name="Koesema E."/>
            <person name="Ishida J."/>
            <person name="Jiang P.X."/>
            <person name="Jones T."/>
            <person name="Kawai J."/>
            <person name="Kamiya A."/>
            <person name="Meyers C."/>
            <person name="Nakajima M."/>
            <person name="Narusaka M."/>
            <person name="Seki M."/>
            <person name="Sakurai T."/>
            <person name="Satou M."/>
            <person name="Tamse R."/>
            <person name="Vaysberg M."/>
            <person name="Wallender E.K."/>
            <person name="Wong C."/>
            <person name="Yamamura Y."/>
            <person name="Yuan S."/>
            <person name="Shinozaki K."/>
            <person name="Davis R.W."/>
            <person name="Theologis A."/>
            <person name="Ecker J.R."/>
        </authorList>
    </citation>
    <scope>NUCLEOTIDE SEQUENCE [LARGE SCALE MRNA]</scope>
    <source>
        <strain>cv. Columbia</strain>
    </source>
</reference>
<reference key="5">
    <citation type="journal article" date="2000" name="Plant Physiol.">
        <title>beta-Cyanoalanine synthase is a mitochondrial cysteine synthase-like protein in spinach and Arabidopsis.</title>
        <authorList>
            <person name="Hatzfeld Y."/>
            <person name="Maruyama A."/>
            <person name="Schmidt A."/>
            <person name="Noji M."/>
            <person name="Ishizawa K."/>
            <person name="Saito K."/>
        </authorList>
    </citation>
    <scope>NOMENCLATURE</scope>
</reference>
<reference key="6">
    <citation type="journal article" date="2005" name="Photosyn. Res.">
        <title>Synthesis of the sulfur amino acids: cysteine and methionine.</title>
        <authorList>
            <person name="Wirtz M."/>
            <person name="Droux M."/>
        </authorList>
    </citation>
    <scope>REVIEW</scope>
</reference>
<reference key="7">
    <citation type="journal article" date="2008" name="PLoS ONE">
        <title>Sorting signals, N-terminal modifications and abundance of the chloroplast proteome.</title>
        <authorList>
            <person name="Zybailov B."/>
            <person name="Rutschow H."/>
            <person name="Friso G."/>
            <person name="Rudella A."/>
            <person name="Emanuelsson O."/>
            <person name="Sun Q."/>
            <person name="van Wijk K.J."/>
        </authorList>
    </citation>
    <scope>IDENTIFICATION BY MASS SPECTROMETRY</scope>
    <scope>SUBCELLULAR LOCATION [LARGE SCALE ANALYSIS]</scope>
</reference>
<reference key="8">
    <citation type="journal article" date="2008" name="Plant Cell">
        <title>Analysis of the Arabidopsis O-acetylserine(thiol)lyase gene family demonstrates compartment-specific differences in the regulation of cysteine synthesis.</title>
        <authorList>
            <person name="Heeg C."/>
            <person name="Kruse C."/>
            <person name="Jost R."/>
            <person name="Gutensohn M."/>
            <person name="Ruppert T."/>
            <person name="Wirtz M."/>
            <person name="Hell R."/>
        </authorList>
    </citation>
    <scope>FUNCTION</scope>
</reference>
<reference key="9">
    <citation type="journal article" date="2008" name="Plant Physiol.">
        <title>Physiological roles of the beta-substituted alanine synthase gene family in Arabidopsis.</title>
        <authorList>
            <person name="Watanabe M."/>
            <person name="Kusano M."/>
            <person name="Oikawa A."/>
            <person name="Fukushima A."/>
            <person name="Noji M."/>
            <person name="Saito K."/>
        </authorList>
    </citation>
    <scope>GENE FAMILY</scope>
    <scope>DISRUPTION PHENOTYPE</scope>
</reference>
<reference key="10">
    <citation type="journal article" date="2010" name="Plant Cell">
        <title>Arabidopsis S-sulfocysteine synthase activity is essential for chloroplast function and long-day light-dependent redox control.</title>
        <authorList>
            <person name="Bermudez M.A."/>
            <person name="Paez-Ochoa M.A."/>
            <person name="Gotor C."/>
            <person name="Romero L.C."/>
        </authorList>
    </citation>
    <scope>FUNCTION</scope>
    <scope>CATALYTIC ACTIVITY</scope>
    <scope>BIOPHYSICOCHEMICAL PROPERTIES</scope>
    <scope>DISRUPTION PHENOTYPE</scope>
</reference>
<reference key="11">
    <citation type="journal article" date="2012" name="Plant Physiol.">
        <title>Photosynthetic adaptation to length of day is dependent on S-sulfocysteine synthase activity in the thylakoid lumen.</title>
        <authorList>
            <person name="Bermudez M.A."/>
            <person name="Galmes J."/>
            <person name="Moreno I."/>
            <person name="Mullineaux P.M."/>
            <person name="Gotor C."/>
            <person name="Romero L.C."/>
        </authorList>
    </citation>
    <scope>FUNCTION</scope>
    <scope>SUBCELLULAR LOCATION</scope>
    <scope>DISRUPTION PHENOTYPE</scope>
</reference>
<reference key="12">
    <citation type="journal article" date="2013" name="Plant Signal. Behav.">
        <title>S-sulfocysteine synthase function in sensing chloroplast redox status.</title>
        <authorList>
            <person name="Gotor C."/>
            <person name="Romero L.C."/>
        </authorList>
    </citation>
    <scope>FUNCTION</scope>
</reference>
<accession>O22682</accession>